<feature type="chain" id="PRO_0000315804" description="Beta-alanine-activating enzyme">
    <location>
        <begin position="1"/>
        <end position="1100"/>
    </location>
</feature>
<feature type="domain" description="Carrier" evidence="3">
    <location>
        <begin position="552"/>
        <end position="632"/>
    </location>
</feature>
<feature type="region of interest" description="Disordered" evidence="4">
    <location>
        <begin position="162"/>
        <end position="181"/>
    </location>
</feature>
<feature type="region of interest" description="Disordered" evidence="4">
    <location>
        <begin position="643"/>
        <end position="671"/>
    </location>
</feature>
<feature type="binding site" evidence="1">
    <location>
        <begin position="197"/>
        <end position="205"/>
    </location>
    <ligand>
        <name>ATP</name>
        <dbReference type="ChEBI" id="CHEBI:30616"/>
    </ligand>
</feature>
<feature type="binding site" evidence="1">
    <location>
        <position position="427"/>
    </location>
    <ligand>
        <name>ATP</name>
        <dbReference type="ChEBI" id="CHEBI:30616"/>
    </ligand>
</feature>
<feature type="binding site" evidence="1">
    <location>
        <position position="441"/>
    </location>
    <ligand>
        <name>ATP</name>
        <dbReference type="ChEBI" id="CHEBI:30616"/>
    </ligand>
</feature>
<feature type="binding site" evidence="1">
    <location>
        <position position="526"/>
    </location>
    <ligand>
        <name>ATP</name>
        <dbReference type="ChEBI" id="CHEBI:30616"/>
    </ligand>
</feature>
<feature type="modified residue" description="O-(pantetheine 4'-phosphoryl)serine" evidence="3">
    <location>
        <position position="591"/>
    </location>
</feature>
<feature type="modified residue" description="Phosphoserine" evidence="2">
    <location>
        <position position="651"/>
    </location>
</feature>
<feature type="splice variant" id="VSP_030714" description="In isoform 3." evidence="9">
    <location>
        <begin position="223"/>
        <end position="1100"/>
    </location>
</feature>
<feature type="splice variant" id="VSP_030715" description="In isoform 2." evidence="8">
    <location>
        <begin position="368"/>
        <end position="1100"/>
    </location>
</feature>
<feature type="mutagenesis site" description="Abolishes incorporation of beta-alanine." evidence="7">
    <original>S</original>
    <variation>A</variation>
    <location>
        <position position="591"/>
    </location>
</feature>
<sequence>MTLQELVLRTASVYMDRTAVCFDEGNNQPPVCYSYKALLSAASELSHFLIAHCDFGGIREIGLYCQPGINLPSWILGILQVPAAYAPIDPDSPPSLSTYFMKKCDLKYVLVEKQQLSKFKSSHETVLNYDTVSVEHKDLALFRLHWEDGRVSTVLGDRADQHKVTDREDRVSAESRTPEKEHMDMRHDGCLAYVLHTSGTTGTPKIVRVPHACILPNIQHFRSLFDITQEDILFLASPLTFDPSVVEIFVSLSSGACLLIVPTSVKVLPSKLADILFSRHRVTVLQATPTLLRRFGSELIKSTVLSAHTSLRVLALGGEAFPSLTILKSWRGKGNRTQIFNIYGITEVSSWATFYRIPEEILNSAVKHESPVQLGSPLLGTVIEVRDQNGSPVLEGTGQVFLGGKNRVCFLDDEMTVPLGTMRATGDFVTVKDGEIFFLGRKDSQIKRHGKRLNIALVQQVAEELRQVESCAVTWYNQERLILFIVSKVDLVKDCIFKELQKHLPAHALPDDMVLIDTLPFTCHGKVDVSELNKIYLDYISSQPRNELHGKEELWGKLQYLWKSILCLPEDPEDTLKVPANSVFLDSGGDSLKSMRLLSEIERLTGTAIPGLLEVILSSSLLDVYNHIVQAVFTPEDRKANRSYTTKRKFSDADPEEASGKPARLESAWPSNHAGETNSVIALSRGSQVLSLGAGRLLTQLGLCLPVCSLDLIPQTNTQILKSLSPPAPDENLEKPPLFQQGSPVVGAMAMALRERWRSDTGKCVDASPLLVRAAVQDKPSTTVYIGSHSHTVKAVDLSSGETRWEQLLGDRIESSACVSKCGNFIVVGCYNGLVYVLKSNSGEKYWTFTTEDAVKSSPAVDPTTGLIYVGSHDQHAYALDIYEKKCVWKLNCEGALFSSPCVSLSPHHLYCATLGGLLLALNPASGSTVWKRSCGKPLFSSPRCYQQYICIGCVDGSLLCFTHSGEQVWRFAAGGPIFSSPCVSAAEQEIFFGSHDCFIYCCSKEGHLRWKFETTARVYATPFAFSNHPRSDDALLAAASTDGKLWVLESRSGELRSVYELPGEVFSSPVVWESMLVIGCRNNYIYCLDLLCGDKNNQV</sequence>
<dbReference type="EC" id="6.2.1.-" evidence="15"/>
<dbReference type="EMBL" id="AB095954">
    <property type="protein sequence ID" value="BAC75954.1"/>
    <property type="molecule type" value="mRNA"/>
</dbReference>
<dbReference type="EMBL" id="AK038779">
    <property type="protein sequence ID" value="BAE43303.1"/>
    <property type="molecule type" value="mRNA"/>
</dbReference>
<dbReference type="EMBL" id="AK043807">
    <property type="protein sequence ID" value="BAC31660.1"/>
    <property type="molecule type" value="mRNA"/>
</dbReference>
<dbReference type="EMBL" id="BC094507">
    <property type="protein sequence ID" value="AAH94507.1"/>
    <property type="molecule type" value="mRNA"/>
</dbReference>
<dbReference type="EMBL" id="BC128330">
    <property type="protein sequence ID" value="AAI28331.1"/>
    <property type="molecule type" value="mRNA"/>
</dbReference>
<dbReference type="CCDS" id="CCDS19366.1">
    <molecule id="Q80WC9-1"/>
</dbReference>
<dbReference type="RefSeq" id="NP_001363933.1">
    <molecule id="Q80WC9-1"/>
    <property type="nucleotide sequence ID" value="NM_001377004.1"/>
</dbReference>
<dbReference type="RefSeq" id="NP_776126.1">
    <molecule id="Q80WC9-1"/>
    <property type="nucleotide sequence ID" value="NM_173765.4"/>
</dbReference>
<dbReference type="RefSeq" id="XP_006534916.1">
    <molecule id="Q80WC9-1"/>
    <property type="nucleotide sequence ID" value="XM_006534853.3"/>
</dbReference>
<dbReference type="RefSeq" id="XP_011247723.1">
    <property type="nucleotide sequence ID" value="XM_011249421.1"/>
</dbReference>
<dbReference type="RefSeq" id="XP_011247724.1">
    <molecule id="Q80WC9-1"/>
    <property type="nucleotide sequence ID" value="XM_011249422.2"/>
</dbReference>
<dbReference type="SMR" id="Q80WC9"/>
<dbReference type="BioGRID" id="231109">
    <property type="interactions" value="1"/>
</dbReference>
<dbReference type="FunCoup" id="Q80WC9">
    <property type="interactions" value="192"/>
</dbReference>
<dbReference type="STRING" id="10090.ENSMUSP00000113792"/>
<dbReference type="GlyGen" id="Q80WC9">
    <property type="glycosylation" value="1 site"/>
</dbReference>
<dbReference type="iPTMnet" id="Q80WC9"/>
<dbReference type="PhosphoSitePlus" id="Q80WC9"/>
<dbReference type="SwissPalm" id="Q80WC9"/>
<dbReference type="PaxDb" id="10090-ENSMUSP00000113792"/>
<dbReference type="ProteomicsDB" id="285942">
    <molecule id="Q80WC9-1"/>
</dbReference>
<dbReference type="ProteomicsDB" id="285943">
    <molecule id="Q80WC9-2"/>
</dbReference>
<dbReference type="Antibodypedia" id="24007">
    <property type="antibodies" value="56 antibodies from 15 providers"/>
</dbReference>
<dbReference type="DNASU" id="231326"/>
<dbReference type="Ensembl" id="ENSMUST00000069709.15">
    <molecule id="Q80WC9-1"/>
    <property type="protein sequence ID" value="ENSMUSP00000069279.9"/>
    <property type="gene ID" value="ENSMUSG00000055923.17"/>
</dbReference>
<dbReference type="Ensembl" id="ENSMUST00000120963.8">
    <molecule id="Q80WC9-1"/>
    <property type="protein sequence ID" value="ENSMUSP00000113792.2"/>
    <property type="gene ID" value="ENSMUSG00000055923.17"/>
</dbReference>
<dbReference type="GeneID" id="231326"/>
<dbReference type="KEGG" id="mmu:231326"/>
<dbReference type="UCSC" id="uc008xvi.2">
    <molecule id="Q80WC9-1"/>
    <property type="organism name" value="mouse"/>
</dbReference>
<dbReference type="UCSC" id="uc008xvk.2">
    <molecule id="Q80WC9-3"/>
    <property type="organism name" value="mouse"/>
</dbReference>
<dbReference type="AGR" id="MGI:2442517"/>
<dbReference type="CTD" id="132949"/>
<dbReference type="MGI" id="MGI:2442517">
    <property type="gene designation" value="Aasdh"/>
</dbReference>
<dbReference type="VEuPathDB" id="HostDB:ENSMUSG00000055923"/>
<dbReference type="eggNOG" id="KOG1178">
    <property type="taxonomic scope" value="Eukaryota"/>
</dbReference>
<dbReference type="eggNOG" id="KOG4649">
    <property type="taxonomic scope" value="Eukaryota"/>
</dbReference>
<dbReference type="GeneTree" id="ENSGT00440000033811"/>
<dbReference type="HOGENOM" id="CLU_010423_0_0_1"/>
<dbReference type="InParanoid" id="Q80WC9"/>
<dbReference type="OMA" id="NGNVICC"/>
<dbReference type="OrthoDB" id="408177at2759"/>
<dbReference type="PhylomeDB" id="Q80WC9"/>
<dbReference type="TreeFam" id="TF314245"/>
<dbReference type="BioGRID-ORCS" id="231326">
    <property type="hits" value="2 hits in 77 CRISPR screens"/>
</dbReference>
<dbReference type="ChiTaRS" id="Aasdh">
    <property type="organism name" value="mouse"/>
</dbReference>
<dbReference type="PRO" id="PR:Q80WC9"/>
<dbReference type="Proteomes" id="UP000000589">
    <property type="component" value="Chromosome 5"/>
</dbReference>
<dbReference type="RNAct" id="Q80WC9">
    <property type="molecule type" value="protein"/>
</dbReference>
<dbReference type="Bgee" id="ENSMUSG00000055923">
    <property type="expression patterns" value="Expressed in indifferent gonad and 224 other cell types or tissues"/>
</dbReference>
<dbReference type="ExpressionAtlas" id="Q80WC9">
    <property type="expression patterns" value="baseline and differential"/>
</dbReference>
<dbReference type="GO" id="GO:0016878">
    <property type="term" value="F:acid-thiol ligase activity"/>
    <property type="evidence" value="ECO:0000250"/>
    <property type="project" value="UniProtKB"/>
</dbReference>
<dbReference type="GO" id="GO:0005524">
    <property type="term" value="F:ATP binding"/>
    <property type="evidence" value="ECO:0007669"/>
    <property type="project" value="UniProtKB-KW"/>
</dbReference>
<dbReference type="GO" id="GO:0043041">
    <property type="term" value="P:amino acid activation for nonribosomal peptide biosynthetic process"/>
    <property type="evidence" value="ECO:0000314"/>
    <property type="project" value="MGI"/>
</dbReference>
<dbReference type="GO" id="GO:0019482">
    <property type="term" value="P:beta-alanine metabolic process"/>
    <property type="evidence" value="ECO:0000314"/>
    <property type="project" value="MGI"/>
</dbReference>
<dbReference type="GO" id="GO:0006631">
    <property type="term" value="P:fatty acid metabolic process"/>
    <property type="evidence" value="ECO:0000250"/>
    <property type="project" value="UniProtKB"/>
</dbReference>
<dbReference type="CDD" id="cd17654">
    <property type="entry name" value="A_NRPS_acs4"/>
    <property type="match status" value="1"/>
</dbReference>
<dbReference type="FunFam" id="3.40.50.12780:FF:000027">
    <property type="entry name" value="AASDH isoform 4"/>
    <property type="match status" value="1"/>
</dbReference>
<dbReference type="FunFam" id="2.130.10.10:FF:001301">
    <property type="entry name" value="Beta-alanine-activating enzyme"/>
    <property type="match status" value="1"/>
</dbReference>
<dbReference type="Gene3D" id="2.40.10.480">
    <property type="match status" value="1"/>
</dbReference>
<dbReference type="Gene3D" id="3.30.300.30">
    <property type="match status" value="1"/>
</dbReference>
<dbReference type="Gene3D" id="3.40.50.12780">
    <property type="entry name" value="N-terminal domain of ligase-like"/>
    <property type="match status" value="1"/>
</dbReference>
<dbReference type="Gene3D" id="2.140.10.10">
    <property type="entry name" value="Quinoprotein alcohol dehydrogenase-like superfamily"/>
    <property type="match status" value="1"/>
</dbReference>
<dbReference type="Gene3D" id="2.130.10.10">
    <property type="entry name" value="YVTN repeat-like/Quinoprotein amine dehydrogenase"/>
    <property type="match status" value="1"/>
</dbReference>
<dbReference type="InterPro" id="IPR048005">
    <property type="entry name" value="AASDH_AMP"/>
</dbReference>
<dbReference type="InterPro" id="IPR036736">
    <property type="entry name" value="ACP-like_sf"/>
</dbReference>
<dbReference type="InterPro" id="IPR045851">
    <property type="entry name" value="AMP-bd_C_sf"/>
</dbReference>
<dbReference type="InterPro" id="IPR020845">
    <property type="entry name" value="AMP-binding_CS"/>
</dbReference>
<dbReference type="InterPro" id="IPR000873">
    <property type="entry name" value="AMP-dep_synth/lig_dom"/>
</dbReference>
<dbReference type="InterPro" id="IPR042099">
    <property type="entry name" value="ANL_N_sf"/>
</dbReference>
<dbReference type="InterPro" id="IPR052091">
    <property type="entry name" value="Beta-ala_Activ/Resist"/>
</dbReference>
<dbReference type="InterPro" id="IPR009081">
    <property type="entry name" value="PP-bd_ACP"/>
</dbReference>
<dbReference type="InterPro" id="IPR006162">
    <property type="entry name" value="Ppantetheine_attach_site"/>
</dbReference>
<dbReference type="InterPro" id="IPR018391">
    <property type="entry name" value="PQQ_b-propeller_rpt"/>
</dbReference>
<dbReference type="InterPro" id="IPR002372">
    <property type="entry name" value="PQQ_rpt_dom"/>
</dbReference>
<dbReference type="InterPro" id="IPR011047">
    <property type="entry name" value="Quinoprotein_ADH-like_sf"/>
</dbReference>
<dbReference type="InterPro" id="IPR015943">
    <property type="entry name" value="WD40/YVTN_repeat-like_dom_sf"/>
</dbReference>
<dbReference type="PANTHER" id="PTHR44394">
    <property type="entry name" value="BETA-ALANINE-ACTIVATING ENZYME"/>
    <property type="match status" value="1"/>
</dbReference>
<dbReference type="PANTHER" id="PTHR44394:SF1">
    <property type="entry name" value="BETA-ALANINE-ACTIVATING ENZYME"/>
    <property type="match status" value="1"/>
</dbReference>
<dbReference type="Pfam" id="PF00501">
    <property type="entry name" value="AMP-binding"/>
    <property type="match status" value="1"/>
</dbReference>
<dbReference type="Pfam" id="PF13570">
    <property type="entry name" value="Beta-prop_ACSF4"/>
    <property type="match status" value="1"/>
</dbReference>
<dbReference type="Pfam" id="PF00550">
    <property type="entry name" value="PP-binding"/>
    <property type="match status" value="1"/>
</dbReference>
<dbReference type="SMART" id="SM00564">
    <property type="entry name" value="PQQ"/>
    <property type="match status" value="6"/>
</dbReference>
<dbReference type="SUPFAM" id="SSF56801">
    <property type="entry name" value="Acetyl-CoA synthetase-like"/>
    <property type="match status" value="1"/>
</dbReference>
<dbReference type="SUPFAM" id="SSF47336">
    <property type="entry name" value="ACP-like"/>
    <property type="match status" value="1"/>
</dbReference>
<dbReference type="SUPFAM" id="SSF50998">
    <property type="entry name" value="Quinoprotein alcohol dehydrogenase-like"/>
    <property type="match status" value="1"/>
</dbReference>
<dbReference type="PROSITE" id="PS00455">
    <property type="entry name" value="AMP_BINDING"/>
    <property type="match status" value="1"/>
</dbReference>
<dbReference type="PROSITE" id="PS50075">
    <property type="entry name" value="CARRIER"/>
    <property type="match status" value="1"/>
</dbReference>
<dbReference type="PROSITE" id="PS00012">
    <property type="entry name" value="PHOSPHOPANTETHEINE"/>
    <property type="match status" value="1"/>
</dbReference>
<evidence type="ECO:0000250" key="1"/>
<evidence type="ECO:0000250" key="2">
    <source>
        <dbReference type="UniProtKB" id="Q4L235"/>
    </source>
</evidence>
<evidence type="ECO:0000255" key="3">
    <source>
        <dbReference type="PROSITE-ProRule" id="PRU00258"/>
    </source>
</evidence>
<evidence type="ECO:0000256" key="4">
    <source>
        <dbReference type="SAM" id="MobiDB-lite"/>
    </source>
</evidence>
<evidence type="ECO:0000269" key="5">
    <source>
    </source>
</evidence>
<evidence type="ECO:0000269" key="6">
    <source>
    </source>
</evidence>
<evidence type="ECO:0000269" key="7">
    <source>
    </source>
</evidence>
<evidence type="ECO:0000303" key="8">
    <source>
    </source>
</evidence>
<evidence type="ECO:0000303" key="9">
    <source>
    </source>
</evidence>
<evidence type="ECO:0000303" key="10">
    <source>
    </source>
</evidence>
<evidence type="ECO:0000305" key="11"/>
<evidence type="ECO:0000305" key="12">
    <source>
    </source>
</evidence>
<evidence type="ECO:0000305" key="13">
    <source>
    </source>
</evidence>
<evidence type="ECO:0000305" key="14">
    <source>
    </source>
</evidence>
<evidence type="ECO:0000305" key="15">
    <source>
    </source>
</evidence>
<keyword id="KW-0025">Alternative splicing</keyword>
<keyword id="KW-0067">ATP-binding</keyword>
<keyword id="KW-0276">Fatty acid metabolism</keyword>
<keyword id="KW-0436">Ligase</keyword>
<keyword id="KW-0443">Lipid metabolism</keyword>
<keyword id="KW-0520">NAD</keyword>
<keyword id="KW-0547">Nucleotide-binding</keyword>
<keyword id="KW-0596">Phosphopantetheine</keyword>
<keyword id="KW-0597">Phosphoprotein</keyword>
<keyword id="KW-1185">Reference proteome</keyword>
<gene>
    <name type="primary">Aasdh</name>
    <name type="synonym">Acsf4</name>
    <name type="synonym">U26</name>
</gene>
<organism>
    <name type="scientific">Mus musculus</name>
    <name type="common">Mouse</name>
    <dbReference type="NCBI Taxonomy" id="10090"/>
    <lineage>
        <taxon>Eukaryota</taxon>
        <taxon>Metazoa</taxon>
        <taxon>Chordata</taxon>
        <taxon>Craniata</taxon>
        <taxon>Vertebrata</taxon>
        <taxon>Euteleostomi</taxon>
        <taxon>Mammalia</taxon>
        <taxon>Eutheria</taxon>
        <taxon>Euarchontoglires</taxon>
        <taxon>Glires</taxon>
        <taxon>Rodentia</taxon>
        <taxon>Myomorpha</taxon>
        <taxon>Muroidea</taxon>
        <taxon>Muridae</taxon>
        <taxon>Murinae</taxon>
        <taxon>Mus</taxon>
        <taxon>Mus</taxon>
    </lineage>
</organism>
<proteinExistence type="evidence at protein level"/>
<accession>Q80WC9</accession>
<accession>Q3V3L2</accession>
<accession>Q505K4</accession>
<accession>Q8BRP4</accession>
<name>ACSF4_MOUSE</name>
<reference key="1">
    <citation type="journal article" date="2003" name="Nature">
        <title>Nutritional biochemistry: a new redox-cofactor vitamin for mammals.</title>
        <authorList>
            <person name="Kasahara T."/>
            <person name="Kato T."/>
        </authorList>
    </citation>
    <scope>NUCLEOTIDE SEQUENCE [MRNA] (ISOFORM 1)</scope>
    <scope>INDUCTION</scope>
</reference>
<reference key="2">
    <citation type="journal article" date="2005" name="Science">
        <title>The transcriptional landscape of the mammalian genome.</title>
        <authorList>
            <person name="Carninci P."/>
            <person name="Kasukawa T."/>
            <person name="Katayama S."/>
            <person name="Gough J."/>
            <person name="Frith M.C."/>
            <person name="Maeda N."/>
            <person name="Oyama R."/>
            <person name="Ravasi T."/>
            <person name="Lenhard B."/>
            <person name="Wells C."/>
            <person name="Kodzius R."/>
            <person name="Shimokawa K."/>
            <person name="Bajic V.B."/>
            <person name="Brenner S.E."/>
            <person name="Batalov S."/>
            <person name="Forrest A.R."/>
            <person name="Zavolan M."/>
            <person name="Davis M.J."/>
            <person name="Wilming L.G."/>
            <person name="Aidinis V."/>
            <person name="Allen J.E."/>
            <person name="Ambesi-Impiombato A."/>
            <person name="Apweiler R."/>
            <person name="Aturaliya R.N."/>
            <person name="Bailey T.L."/>
            <person name="Bansal M."/>
            <person name="Baxter L."/>
            <person name="Beisel K.W."/>
            <person name="Bersano T."/>
            <person name="Bono H."/>
            <person name="Chalk A.M."/>
            <person name="Chiu K.P."/>
            <person name="Choudhary V."/>
            <person name="Christoffels A."/>
            <person name="Clutterbuck D.R."/>
            <person name="Crowe M.L."/>
            <person name="Dalla E."/>
            <person name="Dalrymple B.P."/>
            <person name="de Bono B."/>
            <person name="Della Gatta G."/>
            <person name="di Bernardo D."/>
            <person name="Down T."/>
            <person name="Engstrom P."/>
            <person name="Fagiolini M."/>
            <person name="Faulkner G."/>
            <person name="Fletcher C.F."/>
            <person name="Fukushima T."/>
            <person name="Furuno M."/>
            <person name="Futaki S."/>
            <person name="Gariboldi M."/>
            <person name="Georgii-Hemming P."/>
            <person name="Gingeras T.R."/>
            <person name="Gojobori T."/>
            <person name="Green R.E."/>
            <person name="Gustincich S."/>
            <person name="Harbers M."/>
            <person name="Hayashi Y."/>
            <person name="Hensch T.K."/>
            <person name="Hirokawa N."/>
            <person name="Hill D."/>
            <person name="Huminiecki L."/>
            <person name="Iacono M."/>
            <person name="Ikeo K."/>
            <person name="Iwama A."/>
            <person name="Ishikawa T."/>
            <person name="Jakt M."/>
            <person name="Kanapin A."/>
            <person name="Katoh M."/>
            <person name="Kawasawa Y."/>
            <person name="Kelso J."/>
            <person name="Kitamura H."/>
            <person name="Kitano H."/>
            <person name="Kollias G."/>
            <person name="Krishnan S.P."/>
            <person name="Kruger A."/>
            <person name="Kummerfeld S.K."/>
            <person name="Kurochkin I.V."/>
            <person name="Lareau L.F."/>
            <person name="Lazarevic D."/>
            <person name="Lipovich L."/>
            <person name="Liu J."/>
            <person name="Liuni S."/>
            <person name="McWilliam S."/>
            <person name="Madan Babu M."/>
            <person name="Madera M."/>
            <person name="Marchionni L."/>
            <person name="Matsuda H."/>
            <person name="Matsuzawa S."/>
            <person name="Miki H."/>
            <person name="Mignone F."/>
            <person name="Miyake S."/>
            <person name="Morris K."/>
            <person name="Mottagui-Tabar S."/>
            <person name="Mulder N."/>
            <person name="Nakano N."/>
            <person name="Nakauchi H."/>
            <person name="Ng P."/>
            <person name="Nilsson R."/>
            <person name="Nishiguchi S."/>
            <person name="Nishikawa S."/>
            <person name="Nori F."/>
            <person name="Ohara O."/>
            <person name="Okazaki Y."/>
            <person name="Orlando V."/>
            <person name="Pang K.C."/>
            <person name="Pavan W.J."/>
            <person name="Pavesi G."/>
            <person name="Pesole G."/>
            <person name="Petrovsky N."/>
            <person name="Piazza S."/>
            <person name="Reed J."/>
            <person name="Reid J.F."/>
            <person name="Ring B.Z."/>
            <person name="Ringwald M."/>
            <person name="Rost B."/>
            <person name="Ruan Y."/>
            <person name="Salzberg S.L."/>
            <person name="Sandelin A."/>
            <person name="Schneider C."/>
            <person name="Schoenbach C."/>
            <person name="Sekiguchi K."/>
            <person name="Semple C.A."/>
            <person name="Seno S."/>
            <person name="Sessa L."/>
            <person name="Sheng Y."/>
            <person name="Shibata Y."/>
            <person name="Shimada H."/>
            <person name="Shimada K."/>
            <person name="Silva D."/>
            <person name="Sinclair B."/>
            <person name="Sperling S."/>
            <person name="Stupka E."/>
            <person name="Sugiura K."/>
            <person name="Sultana R."/>
            <person name="Takenaka Y."/>
            <person name="Taki K."/>
            <person name="Tammoja K."/>
            <person name="Tan S.L."/>
            <person name="Tang S."/>
            <person name="Taylor M.S."/>
            <person name="Tegner J."/>
            <person name="Teichmann S.A."/>
            <person name="Ueda H.R."/>
            <person name="van Nimwegen E."/>
            <person name="Verardo R."/>
            <person name="Wei C.L."/>
            <person name="Yagi K."/>
            <person name="Yamanishi H."/>
            <person name="Zabarovsky E."/>
            <person name="Zhu S."/>
            <person name="Zimmer A."/>
            <person name="Hide W."/>
            <person name="Bult C."/>
            <person name="Grimmond S.M."/>
            <person name="Teasdale R.D."/>
            <person name="Liu E.T."/>
            <person name="Brusic V."/>
            <person name="Quackenbush J."/>
            <person name="Wahlestedt C."/>
            <person name="Mattick J.S."/>
            <person name="Hume D.A."/>
            <person name="Kai C."/>
            <person name="Sasaki D."/>
            <person name="Tomaru Y."/>
            <person name="Fukuda S."/>
            <person name="Kanamori-Katayama M."/>
            <person name="Suzuki M."/>
            <person name="Aoki J."/>
            <person name="Arakawa T."/>
            <person name="Iida J."/>
            <person name="Imamura K."/>
            <person name="Itoh M."/>
            <person name="Kato T."/>
            <person name="Kawaji H."/>
            <person name="Kawagashira N."/>
            <person name="Kawashima T."/>
            <person name="Kojima M."/>
            <person name="Kondo S."/>
            <person name="Konno H."/>
            <person name="Nakano K."/>
            <person name="Ninomiya N."/>
            <person name="Nishio T."/>
            <person name="Okada M."/>
            <person name="Plessy C."/>
            <person name="Shibata K."/>
            <person name="Shiraki T."/>
            <person name="Suzuki S."/>
            <person name="Tagami M."/>
            <person name="Waki K."/>
            <person name="Watahiki A."/>
            <person name="Okamura-Oho Y."/>
            <person name="Suzuki H."/>
            <person name="Kawai J."/>
            <person name="Hayashizaki Y."/>
        </authorList>
    </citation>
    <scope>NUCLEOTIDE SEQUENCE [LARGE SCALE MRNA] (ISOFORM 3)</scope>
    <scope>NUCLEOTIDE SEQUENCE [LARGE SCALE MRNA] OF 1-645 (ISOFORM 1)</scope>
    <source>
        <strain>C57BL/6J</strain>
        <tissue>Brain cortex</tissue>
        <tissue>Hypothalamus</tissue>
    </source>
</reference>
<reference key="3">
    <citation type="journal article" date="2004" name="Genome Res.">
        <title>The status, quality, and expansion of the NIH full-length cDNA project: the Mammalian Gene Collection (MGC).</title>
        <authorList>
            <consortium name="The MGC Project Team"/>
        </authorList>
    </citation>
    <scope>NUCLEOTIDE SEQUENCE [LARGE SCALE MRNA] (ISOFORMS 1 AND 2)</scope>
    <source>
        <tissue>Olfactory epithelium</tissue>
    </source>
</reference>
<reference key="4">
    <citation type="journal article" date="2005" name="Nature">
        <title>Biochemistry: role of PQQ as a mammalian enzyme cofactor?</title>
        <authorList>
            <person name="Felton L.M."/>
            <person name="Anthony C."/>
        </authorList>
    </citation>
    <scope>COMMENT ON PUBMED:12712191 RESULTS</scope>
</reference>
<reference key="5">
    <citation type="journal article" date="2005" name="Nature">
        <title>Biochemistry: is pyrroloquinoline quinone a vitamin?</title>
        <authorList>
            <person name="Rucker R."/>
            <person name="Storms D."/>
            <person name="Sheets A."/>
            <person name="Tchaparian E."/>
            <person name="Fascetti A."/>
        </authorList>
    </citation>
    <scope>COMMENT ON PUBMED:12712191 RESULTS</scope>
</reference>
<reference key="6">
    <citation type="journal article" date="2006" name="Biochim. Biophys. Acta">
        <title>Pyrroloquinoline quinone nutritional status alters lysine metabolism and modulates mitochondrial DNA content in the mouse and rat.</title>
        <authorList>
            <person name="Bauerly K.A."/>
            <person name="Storms D.H."/>
            <person name="Harris C.B."/>
            <person name="Hajizadeh S."/>
            <person name="Sun M.Y."/>
            <person name="Cheung C.P."/>
            <person name="Satre M.A."/>
            <person name="Fascetti A.J."/>
            <person name="Tchaparian E."/>
            <person name="Rucker R.B."/>
        </authorList>
    </citation>
    <scope>INDUCTION</scope>
</reference>
<reference key="7">
    <citation type="journal article" date="2014" name="FEBS J.">
        <title>Vertebrate acyl CoA synthetase family member 4 (ACSF4-U26) is a beta-alanine-activating enzyme homologous to bacterial non-ribosomal peptide synthetase.</title>
        <authorList>
            <person name="Drozak J."/>
            <person name="Veiga-da-Cunha M."/>
            <person name="Kadziolka B."/>
            <person name="Van Schaftingen E."/>
        </authorList>
    </citation>
    <scope>FUNCTION</scope>
    <scope>CATALYTIC ACTIVITY</scope>
    <scope>MUTAGENESIS OF SER-591</scope>
</reference>
<protein>
    <recommendedName>
        <fullName evidence="10">Beta-alanine-activating enzyme</fullName>
        <ecNumber evidence="15">6.2.1.-</ecNumber>
    </recommendedName>
    <alternativeName>
        <fullName>Acyl-CoA synthetase family member 4</fullName>
    </alternativeName>
    <alternativeName>
        <fullName>Protein LYS2 homolog</fullName>
    </alternativeName>
</protein>
<comment type="function">
    <text evidence="7 10">Covalently binds beta-alanine in an ATP-dependent manner to form a thioester bond with its phosphopantetheine group and transfers it to an as yet unknown acceptor via an amide bond. May be required for a post-translational protein modification or for post-transcriptional modification of an RNA.</text>
</comment>
<comment type="alternative products">
    <event type="alternative splicing"/>
    <isoform>
        <id>Q80WC9-1</id>
        <name>1</name>
        <sequence type="displayed"/>
    </isoform>
    <isoform>
        <id>Q80WC9-2</id>
        <name>2</name>
        <sequence type="described" ref="VSP_030715"/>
    </isoform>
    <isoform>
        <id>Q80WC9-3</id>
        <name>3</name>
        <sequence type="described" ref="VSP_030714"/>
    </isoform>
</comment>
<comment type="induction">
    <text evidence="5 6">Has been shown to be up-regulated by a lysine-rich diet (PubMed:12712191). However, levels of expression have also been shown not to be significantly changed even when diets differ markedly in PQQ and lysine content (PubMed:17029795).</text>
</comment>
<comment type="similarity">
    <text evidence="11">Belongs to the ATP-dependent AMP-binding enzyme family.</text>
</comment>
<comment type="caution">
    <text evidence="12 13 14">Was suggested to bind pyrroloquinoline quinone (PQQ) based on prediction tools and indirect results (PubMed:12712191). However, this has not been confirmed in other publications (PubMed:15689994, PubMed:15689995).</text>
</comment>
<comment type="caution">
    <text evidence="12 15">In invertebrates, the aminoadipate-semialdehyde dehydrogenase reaction is a key step of the L-lysine biosynthesis pathway which is not fully conserved in vertebrates and it has been suggested that this protein participates in the reverse reaction i.e. in lysine catabolism (PubMed:12712191). However, this is unlikely to be the case as no dehydrogenase activity has been detected and the authentic mammalian 2-aminoadipate semialdehyde dehydrogenase has been identified as ALDH7A1 (PubMed:24467666).</text>
</comment>